<feature type="chain" id="PRO_0000185358" description="Glucose-6-phosphate isomerase">
    <location>
        <begin position="1"/>
        <end position="189"/>
    </location>
</feature>
<feature type="binding site" evidence="1">
    <location>
        <position position="88"/>
    </location>
    <ligand>
        <name>Fe cation</name>
        <dbReference type="ChEBI" id="CHEBI:24875"/>
    </ligand>
</feature>
<feature type="binding site" evidence="1">
    <location>
        <position position="90"/>
    </location>
    <ligand>
        <name>Fe cation</name>
        <dbReference type="ChEBI" id="CHEBI:24875"/>
    </ligand>
</feature>
<feature type="binding site" evidence="1">
    <location>
        <position position="97"/>
    </location>
    <ligand>
        <name>Fe cation</name>
        <dbReference type="ChEBI" id="CHEBI:24875"/>
    </ligand>
</feature>
<feature type="binding site" evidence="1">
    <location>
        <position position="136"/>
    </location>
    <ligand>
        <name>Fe cation</name>
        <dbReference type="ChEBI" id="CHEBI:24875"/>
    </ligand>
</feature>
<comment type="catalytic activity">
    <reaction>
        <text>alpha-D-glucose 6-phosphate = beta-D-fructose 6-phosphate</text>
        <dbReference type="Rhea" id="RHEA:11816"/>
        <dbReference type="ChEBI" id="CHEBI:57634"/>
        <dbReference type="ChEBI" id="CHEBI:58225"/>
        <dbReference type="EC" id="5.3.1.9"/>
    </reaction>
</comment>
<comment type="cofactor">
    <cofactor evidence="1">
        <name>Fe cation</name>
        <dbReference type="ChEBI" id="CHEBI:24875"/>
    </cofactor>
    <text evidence="1">Binds 1 Fe cation per subunit.</text>
</comment>
<comment type="pathway">
    <text>Carbohydrate degradation; glycolysis; D-glyceraldehyde 3-phosphate and glycerone phosphate from D-glucose: step 2/4.</text>
</comment>
<comment type="subunit">
    <text evidence="1">Homodimer.</text>
</comment>
<comment type="subcellular location">
    <subcellularLocation>
        <location evidence="1">Cytoplasm</location>
    </subcellularLocation>
</comment>
<comment type="similarity">
    <text evidence="2">Belongs to the archaeal-type GPI family.</text>
</comment>
<comment type="sequence caution" evidence="2">
    <conflict type="erroneous initiation">
        <sequence resource="EMBL-CDS" id="BAA31083"/>
    </conflict>
</comment>
<protein>
    <recommendedName>
        <fullName>Glucose-6-phosphate isomerase</fullName>
        <shortName>GPI</shortName>
        <ecNumber>5.3.1.9</ecNumber>
    </recommendedName>
    <alternativeName>
        <fullName>Phosphoglucose isomerase</fullName>
        <shortName>PGI</shortName>
    </alternativeName>
    <alternativeName>
        <fullName>Phosphohexose isomerase</fullName>
        <shortName>PHI</shortName>
    </alternativeName>
</protein>
<sequence>MYKEPLGVKVDFESGVIEGAKKLVRRLSDMKGYFLDEETWRELVEREDPVVYEVYAVEQEEKEGDLNFATTVLYPGKVGKEFFFTKGHFHAKRDRAEVYIALKGKGGMLLQTPEGEARWIPMEPGTVVYVPPYWAHRTVNTGDEPFIFLAIYPADAGHDYGTIAEKGFSKIVIEENGEVKVVDNPRWKN</sequence>
<accession>O59618</accession>
<gene>
    <name type="primary">pgiA</name>
    <name type="ordered locus">PH1956</name>
</gene>
<reference key="1">
    <citation type="journal article" date="1998" name="DNA Res.">
        <title>Complete sequence and gene organization of the genome of a hyper-thermophilic archaebacterium, Pyrococcus horikoshii OT3.</title>
        <authorList>
            <person name="Kawarabayasi Y."/>
            <person name="Sawada M."/>
            <person name="Horikawa H."/>
            <person name="Haikawa Y."/>
            <person name="Hino Y."/>
            <person name="Yamamoto S."/>
            <person name="Sekine M."/>
            <person name="Baba S."/>
            <person name="Kosugi H."/>
            <person name="Hosoyama A."/>
            <person name="Nagai Y."/>
            <person name="Sakai M."/>
            <person name="Ogura K."/>
            <person name="Otsuka R."/>
            <person name="Nakazawa H."/>
            <person name="Takamiya M."/>
            <person name="Ohfuku Y."/>
            <person name="Funahashi T."/>
            <person name="Tanaka T."/>
            <person name="Kudoh Y."/>
            <person name="Yamazaki J."/>
            <person name="Kushida N."/>
            <person name="Oguchi A."/>
            <person name="Aoki K."/>
            <person name="Yoshizawa T."/>
            <person name="Nakamura Y."/>
            <person name="Robb F.T."/>
            <person name="Horikoshi K."/>
            <person name="Masuchi Y."/>
            <person name="Shizuya H."/>
            <person name="Kikuchi H."/>
        </authorList>
    </citation>
    <scope>NUCLEOTIDE SEQUENCE [LARGE SCALE GENOMIC DNA]</scope>
    <source>
        <strain>ATCC 700860 / DSM 12428 / JCM 9974 / NBRC 100139 / OT-3</strain>
    </source>
</reference>
<name>G6PI_PYRHO</name>
<organism>
    <name type="scientific">Pyrococcus horikoshii (strain ATCC 700860 / DSM 12428 / JCM 9974 / NBRC 100139 / OT-3)</name>
    <dbReference type="NCBI Taxonomy" id="70601"/>
    <lineage>
        <taxon>Archaea</taxon>
        <taxon>Methanobacteriati</taxon>
        <taxon>Methanobacteriota</taxon>
        <taxon>Thermococci</taxon>
        <taxon>Thermococcales</taxon>
        <taxon>Thermococcaceae</taxon>
        <taxon>Pyrococcus</taxon>
    </lineage>
</organism>
<proteinExistence type="inferred from homology"/>
<keyword id="KW-0963">Cytoplasm</keyword>
<keyword id="KW-0312">Gluconeogenesis</keyword>
<keyword id="KW-0324">Glycolysis</keyword>
<keyword id="KW-0408">Iron</keyword>
<keyword id="KW-0413">Isomerase</keyword>
<keyword id="KW-0479">Metal-binding</keyword>
<evidence type="ECO:0000250" key="1"/>
<evidence type="ECO:0000305" key="2"/>
<dbReference type="EC" id="5.3.1.9"/>
<dbReference type="EMBL" id="BA000001">
    <property type="protein sequence ID" value="BAA31083.1"/>
    <property type="status" value="ALT_INIT"/>
    <property type="molecule type" value="Genomic_DNA"/>
</dbReference>
<dbReference type="PIR" id="D71211">
    <property type="entry name" value="D71211"/>
</dbReference>
<dbReference type="RefSeq" id="WP_048053524.1">
    <property type="nucleotide sequence ID" value="NC_000961.1"/>
</dbReference>
<dbReference type="SMR" id="O59618"/>
<dbReference type="STRING" id="70601.gene:9378969"/>
<dbReference type="EnsemblBacteria" id="BAA31083">
    <property type="protein sequence ID" value="BAA31083"/>
    <property type="gene ID" value="BAA31083"/>
</dbReference>
<dbReference type="GeneID" id="1442804"/>
<dbReference type="KEGG" id="pho:PH1956"/>
<dbReference type="eggNOG" id="arCOG02602">
    <property type="taxonomic scope" value="Archaea"/>
</dbReference>
<dbReference type="OrthoDB" id="49661at2157"/>
<dbReference type="UniPathway" id="UPA00109">
    <property type="reaction ID" value="UER00181"/>
</dbReference>
<dbReference type="Proteomes" id="UP000000752">
    <property type="component" value="Chromosome"/>
</dbReference>
<dbReference type="GO" id="GO:0005737">
    <property type="term" value="C:cytoplasm"/>
    <property type="evidence" value="ECO:0007669"/>
    <property type="project" value="UniProtKB-SubCell"/>
</dbReference>
<dbReference type="GO" id="GO:0004347">
    <property type="term" value="F:glucose-6-phosphate isomerase activity"/>
    <property type="evidence" value="ECO:0007669"/>
    <property type="project" value="UniProtKB-UniRule"/>
</dbReference>
<dbReference type="GO" id="GO:0005506">
    <property type="term" value="F:iron ion binding"/>
    <property type="evidence" value="ECO:0007669"/>
    <property type="project" value="InterPro"/>
</dbReference>
<dbReference type="GO" id="GO:0006094">
    <property type="term" value="P:gluconeogenesis"/>
    <property type="evidence" value="ECO:0007669"/>
    <property type="project" value="UniProtKB-UniRule"/>
</dbReference>
<dbReference type="GO" id="GO:0006096">
    <property type="term" value="P:glycolytic process"/>
    <property type="evidence" value="ECO:0007669"/>
    <property type="project" value="UniProtKB-UniRule"/>
</dbReference>
<dbReference type="CDD" id="cd02218">
    <property type="entry name" value="cupin_PGI"/>
    <property type="match status" value="1"/>
</dbReference>
<dbReference type="Gene3D" id="2.60.120.10">
    <property type="entry name" value="Jelly Rolls"/>
    <property type="match status" value="1"/>
</dbReference>
<dbReference type="HAMAP" id="MF_01410">
    <property type="entry name" value="G6P_isomerase_arch"/>
    <property type="match status" value="1"/>
</dbReference>
<dbReference type="InterPro" id="IPR016758">
    <property type="entry name" value="G6P_isomerase_archaea/bacteria"/>
</dbReference>
<dbReference type="InterPro" id="IPR010551">
    <property type="entry name" value="G6P_isomerase_prok"/>
</dbReference>
<dbReference type="InterPro" id="IPR051610">
    <property type="entry name" value="GPI/OXD"/>
</dbReference>
<dbReference type="InterPro" id="IPR014710">
    <property type="entry name" value="RmlC-like_jellyroll"/>
</dbReference>
<dbReference type="InterPro" id="IPR011051">
    <property type="entry name" value="RmlC_Cupin_sf"/>
</dbReference>
<dbReference type="PANTHER" id="PTHR35848:SF6">
    <property type="entry name" value="CUPIN TYPE-2 DOMAIN-CONTAINING PROTEIN"/>
    <property type="match status" value="1"/>
</dbReference>
<dbReference type="PANTHER" id="PTHR35848">
    <property type="entry name" value="OXALATE-BINDING PROTEIN"/>
    <property type="match status" value="1"/>
</dbReference>
<dbReference type="Pfam" id="PF06560">
    <property type="entry name" value="GPI"/>
    <property type="match status" value="1"/>
</dbReference>
<dbReference type="PIRSF" id="PIRSF019325">
    <property type="entry name" value="Glucose-6-phosphate_isomerase"/>
    <property type="match status" value="1"/>
</dbReference>
<dbReference type="SUPFAM" id="SSF51182">
    <property type="entry name" value="RmlC-like cupins"/>
    <property type="match status" value="1"/>
</dbReference>